<dbReference type="EC" id="4.1.1.23" evidence="1"/>
<dbReference type="EMBL" id="CP000679">
    <property type="protein sequence ID" value="ABP67518.1"/>
    <property type="molecule type" value="Genomic_DNA"/>
</dbReference>
<dbReference type="RefSeq" id="WP_011917454.1">
    <property type="nucleotide sequence ID" value="NC_009437.1"/>
</dbReference>
<dbReference type="SMR" id="A4XKT3"/>
<dbReference type="STRING" id="351627.Csac_1933"/>
<dbReference type="KEGG" id="csc:Csac_1933"/>
<dbReference type="eggNOG" id="COG0284">
    <property type="taxonomic scope" value="Bacteria"/>
</dbReference>
<dbReference type="HOGENOM" id="CLU_060704_1_1_9"/>
<dbReference type="OrthoDB" id="9808470at2"/>
<dbReference type="UniPathway" id="UPA00070">
    <property type="reaction ID" value="UER00120"/>
</dbReference>
<dbReference type="Proteomes" id="UP000000256">
    <property type="component" value="Chromosome"/>
</dbReference>
<dbReference type="GO" id="GO:0004590">
    <property type="term" value="F:orotidine-5'-phosphate decarboxylase activity"/>
    <property type="evidence" value="ECO:0007669"/>
    <property type="project" value="UniProtKB-UniRule"/>
</dbReference>
<dbReference type="GO" id="GO:0006207">
    <property type="term" value="P:'de novo' pyrimidine nucleobase biosynthetic process"/>
    <property type="evidence" value="ECO:0007669"/>
    <property type="project" value="InterPro"/>
</dbReference>
<dbReference type="GO" id="GO:0044205">
    <property type="term" value="P:'de novo' UMP biosynthetic process"/>
    <property type="evidence" value="ECO:0007669"/>
    <property type="project" value="UniProtKB-UniRule"/>
</dbReference>
<dbReference type="CDD" id="cd04725">
    <property type="entry name" value="OMP_decarboxylase_like"/>
    <property type="match status" value="1"/>
</dbReference>
<dbReference type="Gene3D" id="3.20.20.70">
    <property type="entry name" value="Aldolase class I"/>
    <property type="match status" value="1"/>
</dbReference>
<dbReference type="HAMAP" id="MF_01215">
    <property type="entry name" value="OMPdecase_type2"/>
    <property type="match status" value="1"/>
</dbReference>
<dbReference type="InterPro" id="IPR013785">
    <property type="entry name" value="Aldolase_TIM"/>
</dbReference>
<dbReference type="InterPro" id="IPR011995">
    <property type="entry name" value="OMPdecase_type-2"/>
</dbReference>
<dbReference type="InterPro" id="IPR001754">
    <property type="entry name" value="OMPdeCOase_dom"/>
</dbReference>
<dbReference type="InterPro" id="IPR011060">
    <property type="entry name" value="RibuloseP-bd_barrel"/>
</dbReference>
<dbReference type="NCBIfam" id="TIGR02127">
    <property type="entry name" value="pyrF_sub2"/>
    <property type="match status" value="1"/>
</dbReference>
<dbReference type="PANTHER" id="PTHR43375">
    <property type="entry name" value="OROTIDINE 5'-PHOSPHATE DECARBOXYLASE"/>
    <property type="match status" value="1"/>
</dbReference>
<dbReference type="PANTHER" id="PTHR43375:SF1">
    <property type="entry name" value="OROTIDINE 5'-PHOSPHATE DECARBOXYLASE"/>
    <property type="match status" value="1"/>
</dbReference>
<dbReference type="Pfam" id="PF00215">
    <property type="entry name" value="OMPdecase"/>
    <property type="match status" value="1"/>
</dbReference>
<dbReference type="SMART" id="SM00934">
    <property type="entry name" value="OMPdecase"/>
    <property type="match status" value="1"/>
</dbReference>
<dbReference type="SUPFAM" id="SSF51366">
    <property type="entry name" value="Ribulose-phoshate binding barrel"/>
    <property type="match status" value="1"/>
</dbReference>
<comment type="catalytic activity">
    <reaction evidence="1">
        <text>orotidine 5'-phosphate + H(+) = UMP + CO2</text>
        <dbReference type="Rhea" id="RHEA:11596"/>
        <dbReference type="ChEBI" id="CHEBI:15378"/>
        <dbReference type="ChEBI" id="CHEBI:16526"/>
        <dbReference type="ChEBI" id="CHEBI:57538"/>
        <dbReference type="ChEBI" id="CHEBI:57865"/>
        <dbReference type="EC" id="4.1.1.23"/>
    </reaction>
</comment>
<comment type="pathway">
    <text evidence="1">Pyrimidine metabolism; UMP biosynthesis via de novo pathway; UMP from orotate: step 2/2.</text>
</comment>
<comment type="similarity">
    <text evidence="1">Belongs to the OMP decarboxylase family. Type 2 subfamily.</text>
</comment>
<protein>
    <recommendedName>
        <fullName evidence="1">Orotidine 5'-phosphate decarboxylase</fullName>
        <ecNumber evidence="1">4.1.1.23</ecNumber>
    </recommendedName>
    <alternativeName>
        <fullName evidence="1">OMP decarboxylase</fullName>
        <shortName evidence="1">OMPDCase</shortName>
        <shortName evidence="1">OMPdecase</shortName>
    </alternativeName>
</protein>
<evidence type="ECO:0000255" key="1">
    <source>
        <dbReference type="HAMAP-Rule" id="MF_01215"/>
    </source>
</evidence>
<organism>
    <name type="scientific">Caldicellulosiruptor saccharolyticus (strain ATCC 43494 / DSM 8903 / Tp8T 6331)</name>
    <dbReference type="NCBI Taxonomy" id="351627"/>
    <lineage>
        <taxon>Bacteria</taxon>
        <taxon>Bacillati</taxon>
        <taxon>Bacillota</taxon>
        <taxon>Bacillota incertae sedis</taxon>
        <taxon>Caldicellulosiruptorales</taxon>
        <taxon>Caldicellulosiruptoraceae</taxon>
        <taxon>Caldicellulosiruptor</taxon>
    </lineage>
</organism>
<feature type="chain" id="PRO_1000066460" description="Orotidine 5'-phosphate decarboxylase">
    <location>
        <begin position="1"/>
        <end position="305"/>
    </location>
</feature>
<feature type="active site" description="Proton donor" evidence="1">
    <location>
        <position position="108"/>
    </location>
</feature>
<accession>A4XKT3</accession>
<name>PYRF_CALS8</name>
<reference key="1">
    <citation type="submission" date="2007-04" db="EMBL/GenBank/DDBJ databases">
        <title>Genome sequence of the thermophilic hydrogen-producing bacterium Caldicellulosiruptor saccharolyticus DSM 8903.</title>
        <authorList>
            <person name="Copeland A."/>
            <person name="Lucas S."/>
            <person name="Lapidus A."/>
            <person name="Barry K."/>
            <person name="Detter J.C."/>
            <person name="Glavina del Rio T."/>
            <person name="Hammon N."/>
            <person name="Israni S."/>
            <person name="Dalin E."/>
            <person name="Tice H."/>
            <person name="Pitluck S."/>
            <person name="Kiss H."/>
            <person name="Brettin T."/>
            <person name="Bruce D."/>
            <person name="Han C."/>
            <person name="Schmutz J."/>
            <person name="Larimer F."/>
            <person name="Land M."/>
            <person name="Hauser L."/>
            <person name="Kyrpides N."/>
            <person name="Lykidis A."/>
            <person name="van de Werken H.J.G."/>
            <person name="Verhaart M.R.A."/>
            <person name="VanFossen A.L."/>
            <person name="Lewis D.L."/>
            <person name="Nichols J.D."/>
            <person name="Goorissen H.P."/>
            <person name="van Niel E.W.J."/>
            <person name="Stams F.J.M."/>
            <person name="Willquist K.U."/>
            <person name="Ward D.E."/>
            <person name="van der Oost J."/>
            <person name="Kelly R.M."/>
            <person name="Kengen S.M.W."/>
            <person name="Richardson P."/>
        </authorList>
    </citation>
    <scope>NUCLEOTIDE SEQUENCE [LARGE SCALE GENOMIC DNA]</scope>
    <source>
        <strain>ATCC 43494 / DSM 8903 / Tp8T 6331</strain>
    </source>
</reference>
<gene>
    <name evidence="1" type="primary">pyrF</name>
    <name type="ordered locus">Csac_1933</name>
</gene>
<sequence>MLNFSDRLIESIKKKNSVLIAGIDTSIENVPDYFIKRFYDREKSEIDNLKTILFEYNRRIIDAVEENVVGVKFQAAFFEQYSYHGFEVLHKLCEYAKNKKLVVIFDGKRNDISSSAKGYSNAYLGETPVFGRKIRFFEFDAITTNPYLGQDGIKPFVEDCERFKKGLFVLVKTSNPSSADFQDLTVEDKYLFEVVAEKVYEWGKNCVGKEGYSDIGAVVGATQKEAAKRIREILPNSFLLVPGIGVQGGKVEDLKYFVDSNNMGIIVNSSRDIIYAYKNYVHSDFEKSSYLASKSIKESINAAIS</sequence>
<keyword id="KW-0210">Decarboxylase</keyword>
<keyword id="KW-0456">Lyase</keyword>
<keyword id="KW-0665">Pyrimidine biosynthesis</keyword>
<proteinExistence type="inferred from homology"/>